<sequence>MNRRLDNERVIRAPHGSDISAKSWLTEAPLRMLMNNLDPDVAEKPSELIVYGGIGRAARDWDSFDRIVASLRKLEADQTLVVQSGKPVGIFRTHPDAPRVLIANSNIVPHWATLDHFNALDRMGLMMYGQMTAGSWIYIGSQGIVQGTYETFVEVGRRHYHGDLAGKWILTAGLGGMGGAQPLAATMAGASMLAVECQPSRIEMRLRTGYLDRQAASLDEALALMAEAAVTKQAVSVGLLGNAAEIFPELVRRGVRPDIVTDQTSAHDPINGYLPKGWTLAEWEMKRASDPKAVEQASKTSMVGHVQAMLDFHAMGIPTLDYGNNIRQMAKDMGLANAFDFPGFVPAYIRPLFCRGIGPFRWAALSGDPEDIYKTDAKVKELLPDNKHLHNWLDMARQRIKFQGLPARICWVGLGDRHRLGLAFNEMVARGEVKAPIVIGRDHLDSGSVASPNRETEAMKDGSDAVSDWPLLNALLNCASGATWVSLHHGGGVGIGYSQHAGMVIVADGTPDAARRLERVLWNDPATGVMRHADAGYEDAIACADVNGLDLPSLAR</sequence>
<evidence type="ECO:0000255" key="1">
    <source>
        <dbReference type="HAMAP-Rule" id="MF_00577"/>
    </source>
</evidence>
<organism>
    <name type="scientific">Bradyrhizobium sp. (strain BTAi1 / ATCC BAA-1182)</name>
    <dbReference type="NCBI Taxonomy" id="288000"/>
    <lineage>
        <taxon>Bacteria</taxon>
        <taxon>Pseudomonadati</taxon>
        <taxon>Pseudomonadota</taxon>
        <taxon>Alphaproteobacteria</taxon>
        <taxon>Hyphomicrobiales</taxon>
        <taxon>Nitrobacteraceae</taxon>
        <taxon>Bradyrhizobium</taxon>
    </lineage>
</organism>
<dbReference type="EC" id="4.2.1.49" evidence="1"/>
<dbReference type="EMBL" id="CP000494">
    <property type="protein sequence ID" value="ABQ38360.1"/>
    <property type="molecule type" value="Genomic_DNA"/>
</dbReference>
<dbReference type="RefSeq" id="WP_012046301.1">
    <property type="nucleotide sequence ID" value="NC_009485.1"/>
</dbReference>
<dbReference type="SMR" id="A5EQB6"/>
<dbReference type="STRING" id="288000.BBta_6450"/>
<dbReference type="KEGG" id="bbt:BBta_6450"/>
<dbReference type="eggNOG" id="COG2987">
    <property type="taxonomic scope" value="Bacteria"/>
</dbReference>
<dbReference type="HOGENOM" id="CLU_018868_0_1_5"/>
<dbReference type="OrthoDB" id="9764874at2"/>
<dbReference type="UniPathway" id="UPA00379">
    <property type="reaction ID" value="UER00550"/>
</dbReference>
<dbReference type="Proteomes" id="UP000000246">
    <property type="component" value="Chromosome"/>
</dbReference>
<dbReference type="GO" id="GO:0005737">
    <property type="term" value="C:cytoplasm"/>
    <property type="evidence" value="ECO:0007669"/>
    <property type="project" value="UniProtKB-SubCell"/>
</dbReference>
<dbReference type="GO" id="GO:0016153">
    <property type="term" value="F:urocanate hydratase activity"/>
    <property type="evidence" value="ECO:0007669"/>
    <property type="project" value="UniProtKB-UniRule"/>
</dbReference>
<dbReference type="GO" id="GO:0019556">
    <property type="term" value="P:L-histidine catabolic process to glutamate and formamide"/>
    <property type="evidence" value="ECO:0007669"/>
    <property type="project" value="UniProtKB-UniPathway"/>
</dbReference>
<dbReference type="GO" id="GO:0019557">
    <property type="term" value="P:L-histidine catabolic process to glutamate and formate"/>
    <property type="evidence" value="ECO:0007669"/>
    <property type="project" value="UniProtKB-UniPathway"/>
</dbReference>
<dbReference type="FunFam" id="3.40.50.10730:FF:000001">
    <property type="entry name" value="Urocanate hydratase"/>
    <property type="match status" value="1"/>
</dbReference>
<dbReference type="Gene3D" id="3.40.50.10730">
    <property type="entry name" value="Urocanase like domains"/>
    <property type="match status" value="1"/>
</dbReference>
<dbReference type="Gene3D" id="3.40.1770.10">
    <property type="entry name" value="Urocanase superfamily"/>
    <property type="match status" value="1"/>
</dbReference>
<dbReference type="HAMAP" id="MF_00577">
    <property type="entry name" value="HutU"/>
    <property type="match status" value="1"/>
</dbReference>
<dbReference type="InterPro" id="IPR055351">
    <property type="entry name" value="Urocanase"/>
</dbReference>
<dbReference type="InterPro" id="IPR023637">
    <property type="entry name" value="Urocanase-like"/>
</dbReference>
<dbReference type="InterPro" id="IPR035401">
    <property type="entry name" value="Urocanase_C"/>
</dbReference>
<dbReference type="InterPro" id="IPR038364">
    <property type="entry name" value="Urocanase_central_sf"/>
</dbReference>
<dbReference type="InterPro" id="IPR023636">
    <property type="entry name" value="Urocanase_CS"/>
</dbReference>
<dbReference type="InterPro" id="IPR035400">
    <property type="entry name" value="Urocanase_N"/>
</dbReference>
<dbReference type="InterPro" id="IPR035085">
    <property type="entry name" value="Urocanase_Rossmann-like"/>
</dbReference>
<dbReference type="InterPro" id="IPR036190">
    <property type="entry name" value="Urocanase_sf"/>
</dbReference>
<dbReference type="NCBIfam" id="TIGR01228">
    <property type="entry name" value="hutU"/>
    <property type="match status" value="1"/>
</dbReference>
<dbReference type="NCBIfam" id="NF003820">
    <property type="entry name" value="PRK05414.1"/>
    <property type="match status" value="1"/>
</dbReference>
<dbReference type="PANTHER" id="PTHR12216">
    <property type="entry name" value="UROCANATE HYDRATASE"/>
    <property type="match status" value="1"/>
</dbReference>
<dbReference type="PANTHER" id="PTHR12216:SF4">
    <property type="entry name" value="UROCANATE HYDRATASE"/>
    <property type="match status" value="1"/>
</dbReference>
<dbReference type="Pfam" id="PF01175">
    <property type="entry name" value="Urocanase"/>
    <property type="match status" value="1"/>
</dbReference>
<dbReference type="Pfam" id="PF17392">
    <property type="entry name" value="Urocanase_C"/>
    <property type="match status" value="1"/>
</dbReference>
<dbReference type="Pfam" id="PF17391">
    <property type="entry name" value="Urocanase_N"/>
    <property type="match status" value="1"/>
</dbReference>
<dbReference type="PIRSF" id="PIRSF001423">
    <property type="entry name" value="Urocanate_hydrat"/>
    <property type="match status" value="1"/>
</dbReference>
<dbReference type="SUPFAM" id="SSF111326">
    <property type="entry name" value="Urocanase"/>
    <property type="match status" value="1"/>
</dbReference>
<dbReference type="PROSITE" id="PS01233">
    <property type="entry name" value="UROCANASE"/>
    <property type="match status" value="1"/>
</dbReference>
<accession>A5EQB6</accession>
<proteinExistence type="inferred from homology"/>
<name>HUTU_BRASB</name>
<keyword id="KW-0963">Cytoplasm</keyword>
<keyword id="KW-0369">Histidine metabolism</keyword>
<keyword id="KW-0456">Lyase</keyword>
<keyword id="KW-0520">NAD</keyword>
<keyword id="KW-1185">Reference proteome</keyword>
<reference key="1">
    <citation type="journal article" date="2007" name="Science">
        <title>Legumes symbioses: absence of nod genes in photosynthetic bradyrhizobia.</title>
        <authorList>
            <person name="Giraud E."/>
            <person name="Moulin L."/>
            <person name="Vallenet D."/>
            <person name="Barbe V."/>
            <person name="Cytryn E."/>
            <person name="Avarre J.-C."/>
            <person name="Jaubert M."/>
            <person name="Simon D."/>
            <person name="Cartieaux F."/>
            <person name="Prin Y."/>
            <person name="Bena G."/>
            <person name="Hannibal L."/>
            <person name="Fardoux J."/>
            <person name="Kojadinovic M."/>
            <person name="Vuillet L."/>
            <person name="Lajus A."/>
            <person name="Cruveiller S."/>
            <person name="Rouy Z."/>
            <person name="Mangenot S."/>
            <person name="Segurens B."/>
            <person name="Dossat C."/>
            <person name="Franck W.L."/>
            <person name="Chang W.-S."/>
            <person name="Saunders E."/>
            <person name="Bruce D."/>
            <person name="Richardson P."/>
            <person name="Normand P."/>
            <person name="Dreyfus B."/>
            <person name="Pignol D."/>
            <person name="Stacey G."/>
            <person name="Emerich D."/>
            <person name="Vermeglio A."/>
            <person name="Medigue C."/>
            <person name="Sadowsky M."/>
        </authorList>
    </citation>
    <scope>NUCLEOTIDE SEQUENCE [LARGE SCALE GENOMIC DNA]</scope>
    <source>
        <strain>BTAi1 / ATCC BAA-1182</strain>
    </source>
</reference>
<comment type="function">
    <text evidence="1">Catalyzes the conversion of urocanate to 4-imidazolone-5-propionate.</text>
</comment>
<comment type="catalytic activity">
    <reaction evidence="1">
        <text>4-imidazolone-5-propanoate = trans-urocanate + H2O</text>
        <dbReference type="Rhea" id="RHEA:13101"/>
        <dbReference type="ChEBI" id="CHEBI:15377"/>
        <dbReference type="ChEBI" id="CHEBI:17771"/>
        <dbReference type="ChEBI" id="CHEBI:77893"/>
        <dbReference type="EC" id="4.2.1.49"/>
    </reaction>
</comment>
<comment type="cofactor">
    <cofactor evidence="1">
        <name>NAD(+)</name>
        <dbReference type="ChEBI" id="CHEBI:57540"/>
    </cofactor>
    <text evidence="1">Binds 1 NAD(+) per subunit.</text>
</comment>
<comment type="pathway">
    <text evidence="1">Amino-acid degradation; L-histidine degradation into L-glutamate; N-formimidoyl-L-glutamate from L-histidine: step 2/3.</text>
</comment>
<comment type="subcellular location">
    <subcellularLocation>
        <location evidence="1">Cytoplasm</location>
    </subcellularLocation>
</comment>
<comment type="similarity">
    <text evidence="1">Belongs to the urocanase family.</text>
</comment>
<protein>
    <recommendedName>
        <fullName evidence="1">Urocanate hydratase</fullName>
        <shortName evidence="1">Urocanase</shortName>
        <ecNumber evidence="1">4.2.1.49</ecNumber>
    </recommendedName>
    <alternativeName>
        <fullName evidence="1">Imidazolonepropionate hydrolase</fullName>
    </alternativeName>
</protein>
<feature type="chain" id="PRO_1000025122" description="Urocanate hydratase">
    <location>
        <begin position="1"/>
        <end position="556"/>
    </location>
</feature>
<feature type="active site" evidence="1">
    <location>
        <position position="410"/>
    </location>
</feature>
<feature type="binding site" evidence="1">
    <location>
        <begin position="52"/>
        <end position="53"/>
    </location>
    <ligand>
        <name>NAD(+)</name>
        <dbReference type="ChEBI" id="CHEBI:57540"/>
    </ligand>
</feature>
<feature type="binding site" evidence="1">
    <location>
        <position position="130"/>
    </location>
    <ligand>
        <name>NAD(+)</name>
        <dbReference type="ChEBI" id="CHEBI:57540"/>
    </ligand>
</feature>
<feature type="binding site" evidence="1">
    <location>
        <begin position="176"/>
        <end position="178"/>
    </location>
    <ligand>
        <name>NAD(+)</name>
        <dbReference type="ChEBI" id="CHEBI:57540"/>
    </ligand>
</feature>
<feature type="binding site" evidence="1">
    <location>
        <position position="196"/>
    </location>
    <ligand>
        <name>NAD(+)</name>
        <dbReference type="ChEBI" id="CHEBI:57540"/>
    </ligand>
</feature>
<feature type="binding site" evidence="1">
    <location>
        <position position="201"/>
    </location>
    <ligand>
        <name>NAD(+)</name>
        <dbReference type="ChEBI" id="CHEBI:57540"/>
    </ligand>
</feature>
<feature type="binding site" evidence="1">
    <location>
        <begin position="242"/>
        <end position="243"/>
    </location>
    <ligand>
        <name>NAD(+)</name>
        <dbReference type="ChEBI" id="CHEBI:57540"/>
    </ligand>
</feature>
<feature type="binding site" evidence="1">
    <location>
        <begin position="263"/>
        <end position="267"/>
    </location>
    <ligand>
        <name>NAD(+)</name>
        <dbReference type="ChEBI" id="CHEBI:57540"/>
    </ligand>
</feature>
<feature type="binding site" evidence="1">
    <location>
        <begin position="273"/>
        <end position="274"/>
    </location>
    <ligand>
        <name>NAD(+)</name>
        <dbReference type="ChEBI" id="CHEBI:57540"/>
    </ligand>
</feature>
<feature type="binding site" evidence="1">
    <location>
        <position position="322"/>
    </location>
    <ligand>
        <name>NAD(+)</name>
        <dbReference type="ChEBI" id="CHEBI:57540"/>
    </ligand>
</feature>
<feature type="binding site" evidence="1">
    <location>
        <position position="492"/>
    </location>
    <ligand>
        <name>NAD(+)</name>
        <dbReference type="ChEBI" id="CHEBI:57540"/>
    </ligand>
</feature>
<gene>
    <name evidence="1" type="primary">hutU</name>
    <name type="ordered locus">BBta_6450</name>
</gene>